<evidence type="ECO:0000255" key="1">
    <source>
        <dbReference type="HAMAP-Rule" id="MF_00443"/>
    </source>
</evidence>
<reference key="1">
    <citation type="journal article" date="2008" name="BMC Genomics">
        <title>Genome sequence and rapid evolution of the rice pathogen Xanthomonas oryzae pv. oryzae PXO99A.</title>
        <authorList>
            <person name="Salzberg S.L."/>
            <person name="Sommer D.D."/>
            <person name="Schatz M.C."/>
            <person name="Phillippy A.M."/>
            <person name="Rabinowicz P.D."/>
            <person name="Tsuge S."/>
            <person name="Furutani A."/>
            <person name="Ochiai H."/>
            <person name="Delcher A.L."/>
            <person name="Kelley D."/>
            <person name="Madupu R."/>
            <person name="Puiu D."/>
            <person name="Radune D."/>
            <person name="Shumway M."/>
            <person name="Trapnell C."/>
            <person name="Aparna G."/>
            <person name="Jha G."/>
            <person name="Pandey A."/>
            <person name="Patil P.B."/>
            <person name="Ishihara H."/>
            <person name="Meyer D.F."/>
            <person name="Szurek B."/>
            <person name="Verdier V."/>
            <person name="Koebnik R."/>
            <person name="Dow J.M."/>
            <person name="Ryan R.P."/>
            <person name="Hirata H."/>
            <person name="Tsuyumu S."/>
            <person name="Won Lee S."/>
            <person name="Seo Y.-S."/>
            <person name="Sriariyanum M."/>
            <person name="Ronald P.C."/>
            <person name="Sonti R.V."/>
            <person name="Van Sluys M.-A."/>
            <person name="Leach J.E."/>
            <person name="White F.F."/>
            <person name="Bogdanove A.J."/>
        </authorList>
    </citation>
    <scope>NUCLEOTIDE SEQUENCE [LARGE SCALE GENOMIC DNA]</scope>
    <source>
        <strain>PXO99A</strain>
    </source>
</reference>
<name>THIG_XANOP</name>
<feature type="chain" id="PRO_1000196915" description="Thiazole synthase">
    <location>
        <begin position="1"/>
        <end position="264"/>
    </location>
</feature>
<feature type="active site" description="Schiff-base intermediate with DXP" evidence="1">
    <location>
        <position position="106"/>
    </location>
</feature>
<feature type="binding site" evidence="1">
    <location>
        <position position="167"/>
    </location>
    <ligand>
        <name>1-deoxy-D-xylulose 5-phosphate</name>
        <dbReference type="ChEBI" id="CHEBI:57792"/>
    </ligand>
</feature>
<feature type="binding site" evidence="1">
    <location>
        <begin position="193"/>
        <end position="194"/>
    </location>
    <ligand>
        <name>1-deoxy-D-xylulose 5-phosphate</name>
        <dbReference type="ChEBI" id="CHEBI:57792"/>
    </ligand>
</feature>
<feature type="binding site" evidence="1">
    <location>
        <begin position="215"/>
        <end position="216"/>
    </location>
    <ligand>
        <name>1-deoxy-D-xylulose 5-phosphate</name>
        <dbReference type="ChEBI" id="CHEBI:57792"/>
    </ligand>
</feature>
<dbReference type="EC" id="2.8.1.10" evidence="1"/>
<dbReference type="EMBL" id="CP000967">
    <property type="protein sequence ID" value="ACD60218.1"/>
    <property type="molecule type" value="Genomic_DNA"/>
</dbReference>
<dbReference type="RefSeq" id="WP_011409125.1">
    <property type="nucleotide sequence ID" value="NC_010717.2"/>
</dbReference>
<dbReference type="SMR" id="B2SWK7"/>
<dbReference type="KEGG" id="xop:PXO_01841"/>
<dbReference type="eggNOG" id="COG2022">
    <property type="taxonomic scope" value="Bacteria"/>
</dbReference>
<dbReference type="HOGENOM" id="CLU_062233_1_0_6"/>
<dbReference type="UniPathway" id="UPA00060"/>
<dbReference type="Proteomes" id="UP000001740">
    <property type="component" value="Chromosome"/>
</dbReference>
<dbReference type="GO" id="GO:0005737">
    <property type="term" value="C:cytoplasm"/>
    <property type="evidence" value="ECO:0007669"/>
    <property type="project" value="UniProtKB-SubCell"/>
</dbReference>
<dbReference type="GO" id="GO:1990107">
    <property type="term" value="F:thiazole synthase activity"/>
    <property type="evidence" value="ECO:0007669"/>
    <property type="project" value="UniProtKB-EC"/>
</dbReference>
<dbReference type="GO" id="GO:0009229">
    <property type="term" value="P:thiamine diphosphate biosynthetic process"/>
    <property type="evidence" value="ECO:0007669"/>
    <property type="project" value="UniProtKB-UniRule"/>
</dbReference>
<dbReference type="CDD" id="cd04728">
    <property type="entry name" value="ThiG"/>
    <property type="match status" value="1"/>
</dbReference>
<dbReference type="FunFam" id="3.20.20.70:FF:000049">
    <property type="entry name" value="Thiazole synthase"/>
    <property type="match status" value="1"/>
</dbReference>
<dbReference type="Gene3D" id="3.20.20.70">
    <property type="entry name" value="Aldolase class I"/>
    <property type="match status" value="1"/>
</dbReference>
<dbReference type="HAMAP" id="MF_00443">
    <property type="entry name" value="ThiG"/>
    <property type="match status" value="1"/>
</dbReference>
<dbReference type="InterPro" id="IPR013785">
    <property type="entry name" value="Aldolase_TIM"/>
</dbReference>
<dbReference type="InterPro" id="IPR033983">
    <property type="entry name" value="Thiazole_synthase_ThiG"/>
</dbReference>
<dbReference type="InterPro" id="IPR008867">
    <property type="entry name" value="ThiG"/>
</dbReference>
<dbReference type="PANTHER" id="PTHR34266">
    <property type="entry name" value="THIAZOLE SYNTHASE"/>
    <property type="match status" value="1"/>
</dbReference>
<dbReference type="PANTHER" id="PTHR34266:SF2">
    <property type="entry name" value="THIAZOLE SYNTHASE"/>
    <property type="match status" value="1"/>
</dbReference>
<dbReference type="Pfam" id="PF05690">
    <property type="entry name" value="ThiG"/>
    <property type="match status" value="1"/>
</dbReference>
<dbReference type="SUPFAM" id="SSF110399">
    <property type="entry name" value="ThiG-like"/>
    <property type="match status" value="1"/>
</dbReference>
<gene>
    <name evidence="1" type="primary">thiG</name>
    <name type="ordered locus">PXO_01841</name>
</gene>
<proteinExistence type="inferred from homology"/>
<protein>
    <recommendedName>
        <fullName evidence="1">Thiazole synthase</fullName>
        <ecNumber evidence="1">2.8.1.10</ecNumber>
    </recommendedName>
</protein>
<organism>
    <name type="scientific">Xanthomonas oryzae pv. oryzae (strain PXO99A)</name>
    <dbReference type="NCBI Taxonomy" id="360094"/>
    <lineage>
        <taxon>Bacteria</taxon>
        <taxon>Pseudomonadati</taxon>
        <taxon>Pseudomonadota</taxon>
        <taxon>Gammaproteobacteria</taxon>
        <taxon>Lysobacterales</taxon>
        <taxon>Lysobacteraceae</taxon>
        <taxon>Xanthomonas</taxon>
    </lineage>
</organism>
<sequence length="264" mass="27988">MTTPSPSDALLIAGKRYRSRLLTGTGKFKDLDETRLATEAAAAEIVTVAIRRVNIGQDPNAPSLLDVLPPDRYTLLPNTAGCYSAEDAVRTCRLARELLDGHNLTKLEVLGDERTLYPDVVQTLKAAEQLVADGFEVMVYTSDDPILAKRLEEIGCVAVMPLAAPIGSGLGIQNKYNLLEIIENAKVPIIVDAGVGTASDAAIAMELGCDGVLMNTAIAGARDPILMASAMRKAIEAGREAFLAGRIPRKRYASASSPVDGVIG</sequence>
<accession>B2SWK7</accession>
<comment type="function">
    <text evidence="1">Catalyzes the rearrangement of 1-deoxy-D-xylulose 5-phosphate (DXP) to produce the thiazole phosphate moiety of thiamine. Sulfur is provided by the thiocarboxylate moiety of the carrier protein ThiS. In vitro, sulfur can be provided by H(2)S.</text>
</comment>
<comment type="catalytic activity">
    <reaction evidence="1">
        <text>[ThiS sulfur-carrier protein]-C-terminal-Gly-aminoethanethioate + 2-iminoacetate + 1-deoxy-D-xylulose 5-phosphate = [ThiS sulfur-carrier protein]-C-terminal Gly-Gly + 2-[(2R,5Z)-2-carboxy-4-methylthiazol-5(2H)-ylidene]ethyl phosphate + 2 H2O + H(+)</text>
        <dbReference type="Rhea" id="RHEA:26297"/>
        <dbReference type="Rhea" id="RHEA-COMP:12909"/>
        <dbReference type="Rhea" id="RHEA-COMP:19908"/>
        <dbReference type="ChEBI" id="CHEBI:15377"/>
        <dbReference type="ChEBI" id="CHEBI:15378"/>
        <dbReference type="ChEBI" id="CHEBI:57792"/>
        <dbReference type="ChEBI" id="CHEBI:62899"/>
        <dbReference type="ChEBI" id="CHEBI:77846"/>
        <dbReference type="ChEBI" id="CHEBI:90778"/>
        <dbReference type="ChEBI" id="CHEBI:232372"/>
        <dbReference type="EC" id="2.8.1.10"/>
    </reaction>
</comment>
<comment type="pathway">
    <text evidence="1">Cofactor biosynthesis; thiamine diphosphate biosynthesis.</text>
</comment>
<comment type="subunit">
    <text evidence="1">Homotetramer. Forms heterodimers with either ThiH or ThiS.</text>
</comment>
<comment type="subcellular location">
    <subcellularLocation>
        <location evidence="1">Cytoplasm</location>
    </subcellularLocation>
</comment>
<comment type="similarity">
    <text evidence="1">Belongs to the ThiG family.</text>
</comment>
<keyword id="KW-0963">Cytoplasm</keyword>
<keyword id="KW-0704">Schiff base</keyword>
<keyword id="KW-0784">Thiamine biosynthesis</keyword>
<keyword id="KW-0808">Transferase</keyword>